<accession>Q7U892</accession>
<keyword id="KW-0028">Amino-acid biosynthesis</keyword>
<keyword id="KW-0100">Branched-chain amino acid biosynthesis</keyword>
<keyword id="KW-0963">Cytoplasm</keyword>
<keyword id="KW-0432">Leucine biosynthesis</keyword>
<keyword id="KW-0464">Manganese</keyword>
<keyword id="KW-0479">Metal-binding</keyword>
<keyword id="KW-0808">Transferase</keyword>
<name>LEU1_PARMW</name>
<protein>
    <recommendedName>
        <fullName evidence="1">2-isopropylmalate synthase</fullName>
        <ecNumber evidence="1">2.3.3.13</ecNumber>
    </recommendedName>
    <alternativeName>
        <fullName evidence="1">Alpha-IPM synthase</fullName>
    </alternativeName>
    <alternativeName>
        <fullName evidence="1">Alpha-isopropylmalate synthase</fullName>
    </alternativeName>
</protein>
<organism>
    <name type="scientific">Parasynechococcus marenigrum (strain WH8102)</name>
    <dbReference type="NCBI Taxonomy" id="84588"/>
    <lineage>
        <taxon>Bacteria</taxon>
        <taxon>Bacillati</taxon>
        <taxon>Cyanobacteriota</taxon>
        <taxon>Cyanophyceae</taxon>
        <taxon>Synechococcales</taxon>
        <taxon>Prochlorococcaceae</taxon>
        <taxon>Parasynechococcus</taxon>
        <taxon>Parasynechococcus marenigrum</taxon>
    </lineage>
</organism>
<gene>
    <name evidence="1" type="primary">leuA</name>
    <name type="ordered locus">SYNW0730</name>
</gene>
<comment type="function">
    <text evidence="1">Catalyzes the condensation of the acetyl group of acetyl-CoA with 3-methyl-2-oxobutanoate (2-ketoisovalerate) to form 3-carboxy-3-hydroxy-4-methylpentanoate (2-isopropylmalate).</text>
</comment>
<comment type="catalytic activity">
    <reaction evidence="1">
        <text>3-methyl-2-oxobutanoate + acetyl-CoA + H2O = (2S)-2-isopropylmalate + CoA + H(+)</text>
        <dbReference type="Rhea" id="RHEA:21524"/>
        <dbReference type="ChEBI" id="CHEBI:1178"/>
        <dbReference type="ChEBI" id="CHEBI:11851"/>
        <dbReference type="ChEBI" id="CHEBI:15377"/>
        <dbReference type="ChEBI" id="CHEBI:15378"/>
        <dbReference type="ChEBI" id="CHEBI:57287"/>
        <dbReference type="ChEBI" id="CHEBI:57288"/>
        <dbReference type="EC" id="2.3.3.13"/>
    </reaction>
</comment>
<comment type="cofactor">
    <cofactor evidence="1">
        <name>Mn(2+)</name>
        <dbReference type="ChEBI" id="CHEBI:29035"/>
    </cofactor>
</comment>
<comment type="pathway">
    <text evidence="1">Amino-acid biosynthesis; L-leucine biosynthesis; L-leucine from 3-methyl-2-oxobutanoate: step 1/4.</text>
</comment>
<comment type="subunit">
    <text evidence="1">Homodimer.</text>
</comment>
<comment type="subcellular location">
    <subcellularLocation>
        <location evidence="1">Cytoplasm</location>
    </subcellularLocation>
</comment>
<comment type="similarity">
    <text evidence="1">Belongs to the alpha-IPM synthase/homocitrate synthase family. LeuA type 1 subfamily.</text>
</comment>
<proteinExistence type="inferred from homology"/>
<dbReference type="EC" id="2.3.3.13" evidence="1"/>
<dbReference type="EMBL" id="BX569691">
    <property type="protein sequence ID" value="CAE07245.1"/>
    <property type="molecule type" value="Genomic_DNA"/>
</dbReference>
<dbReference type="RefSeq" id="WP_011127595.1">
    <property type="nucleotide sequence ID" value="NC_005070.1"/>
</dbReference>
<dbReference type="SMR" id="Q7U892"/>
<dbReference type="STRING" id="84588.SYNW0730"/>
<dbReference type="KEGG" id="syw:SYNW0730"/>
<dbReference type="eggNOG" id="COG0119">
    <property type="taxonomic scope" value="Bacteria"/>
</dbReference>
<dbReference type="HOGENOM" id="CLU_022158_0_1_3"/>
<dbReference type="UniPathway" id="UPA00048">
    <property type="reaction ID" value="UER00070"/>
</dbReference>
<dbReference type="Proteomes" id="UP000001422">
    <property type="component" value="Chromosome"/>
</dbReference>
<dbReference type="GO" id="GO:0005737">
    <property type="term" value="C:cytoplasm"/>
    <property type="evidence" value="ECO:0007669"/>
    <property type="project" value="UniProtKB-SubCell"/>
</dbReference>
<dbReference type="GO" id="GO:0003852">
    <property type="term" value="F:2-isopropylmalate synthase activity"/>
    <property type="evidence" value="ECO:0007669"/>
    <property type="project" value="UniProtKB-UniRule"/>
</dbReference>
<dbReference type="GO" id="GO:0003985">
    <property type="term" value="F:acetyl-CoA C-acetyltransferase activity"/>
    <property type="evidence" value="ECO:0007669"/>
    <property type="project" value="UniProtKB-UniRule"/>
</dbReference>
<dbReference type="GO" id="GO:0030145">
    <property type="term" value="F:manganese ion binding"/>
    <property type="evidence" value="ECO:0007669"/>
    <property type="project" value="UniProtKB-UniRule"/>
</dbReference>
<dbReference type="GO" id="GO:0009098">
    <property type="term" value="P:L-leucine biosynthetic process"/>
    <property type="evidence" value="ECO:0007669"/>
    <property type="project" value="UniProtKB-UniRule"/>
</dbReference>
<dbReference type="CDD" id="cd07940">
    <property type="entry name" value="DRE_TIM_IPMS"/>
    <property type="match status" value="1"/>
</dbReference>
<dbReference type="FunFam" id="1.10.238.260:FF:000001">
    <property type="entry name" value="2-isopropylmalate synthase"/>
    <property type="match status" value="1"/>
</dbReference>
<dbReference type="FunFam" id="3.20.20.70:FF:000010">
    <property type="entry name" value="2-isopropylmalate synthase"/>
    <property type="match status" value="1"/>
</dbReference>
<dbReference type="Gene3D" id="1.10.238.260">
    <property type="match status" value="1"/>
</dbReference>
<dbReference type="Gene3D" id="3.30.160.270">
    <property type="match status" value="1"/>
</dbReference>
<dbReference type="Gene3D" id="3.20.20.70">
    <property type="entry name" value="Aldolase class I"/>
    <property type="match status" value="1"/>
</dbReference>
<dbReference type="HAMAP" id="MF_01025">
    <property type="entry name" value="LeuA_type1"/>
    <property type="match status" value="1"/>
</dbReference>
<dbReference type="InterPro" id="IPR050073">
    <property type="entry name" value="2-IPM_HCS-like"/>
</dbReference>
<dbReference type="InterPro" id="IPR013709">
    <property type="entry name" value="2-isopropylmalate_synth_dimer"/>
</dbReference>
<dbReference type="InterPro" id="IPR002034">
    <property type="entry name" value="AIPM/Hcit_synth_CS"/>
</dbReference>
<dbReference type="InterPro" id="IPR013785">
    <property type="entry name" value="Aldolase_TIM"/>
</dbReference>
<dbReference type="InterPro" id="IPR054691">
    <property type="entry name" value="LeuA/HCS_post-cat"/>
</dbReference>
<dbReference type="InterPro" id="IPR036230">
    <property type="entry name" value="LeuA_allosteric_dom_sf"/>
</dbReference>
<dbReference type="InterPro" id="IPR005671">
    <property type="entry name" value="LeuA_bact_synth"/>
</dbReference>
<dbReference type="InterPro" id="IPR000891">
    <property type="entry name" value="PYR_CT"/>
</dbReference>
<dbReference type="NCBIfam" id="TIGR00973">
    <property type="entry name" value="leuA_bact"/>
    <property type="match status" value="1"/>
</dbReference>
<dbReference type="NCBIfam" id="NF002086">
    <property type="entry name" value="PRK00915.1-3"/>
    <property type="match status" value="1"/>
</dbReference>
<dbReference type="PANTHER" id="PTHR10277:SF9">
    <property type="entry name" value="2-ISOPROPYLMALATE SYNTHASE 1, CHLOROPLASTIC-RELATED"/>
    <property type="match status" value="1"/>
</dbReference>
<dbReference type="PANTHER" id="PTHR10277">
    <property type="entry name" value="HOMOCITRATE SYNTHASE-RELATED"/>
    <property type="match status" value="1"/>
</dbReference>
<dbReference type="Pfam" id="PF22617">
    <property type="entry name" value="HCS_D2"/>
    <property type="match status" value="1"/>
</dbReference>
<dbReference type="Pfam" id="PF00682">
    <property type="entry name" value="HMGL-like"/>
    <property type="match status" value="1"/>
</dbReference>
<dbReference type="Pfam" id="PF08502">
    <property type="entry name" value="LeuA_dimer"/>
    <property type="match status" value="1"/>
</dbReference>
<dbReference type="SMART" id="SM00917">
    <property type="entry name" value="LeuA_dimer"/>
    <property type="match status" value="1"/>
</dbReference>
<dbReference type="SUPFAM" id="SSF110921">
    <property type="entry name" value="2-isopropylmalate synthase LeuA, allosteric (dimerisation) domain"/>
    <property type="match status" value="1"/>
</dbReference>
<dbReference type="SUPFAM" id="SSF51569">
    <property type="entry name" value="Aldolase"/>
    <property type="match status" value="1"/>
</dbReference>
<dbReference type="PROSITE" id="PS00815">
    <property type="entry name" value="AIPM_HOMOCIT_SYNTH_1"/>
    <property type="match status" value="1"/>
</dbReference>
<dbReference type="PROSITE" id="PS00816">
    <property type="entry name" value="AIPM_HOMOCIT_SYNTH_2"/>
    <property type="match status" value="1"/>
</dbReference>
<dbReference type="PROSITE" id="PS50991">
    <property type="entry name" value="PYR_CT"/>
    <property type="match status" value="1"/>
</dbReference>
<feature type="chain" id="PRO_0000140389" description="2-isopropylmalate synthase">
    <location>
        <begin position="1"/>
        <end position="540"/>
    </location>
</feature>
<feature type="domain" description="Pyruvate carboxyltransferase" evidence="1">
    <location>
        <begin position="8"/>
        <end position="273"/>
    </location>
</feature>
<feature type="region of interest" description="Regulatory domain" evidence="1">
    <location>
        <begin position="408"/>
        <end position="540"/>
    </location>
</feature>
<feature type="binding site" evidence="1">
    <location>
        <position position="17"/>
    </location>
    <ligand>
        <name>Mn(2+)</name>
        <dbReference type="ChEBI" id="CHEBI:29035"/>
    </ligand>
</feature>
<feature type="binding site" evidence="1">
    <location>
        <position position="208"/>
    </location>
    <ligand>
        <name>Mn(2+)</name>
        <dbReference type="ChEBI" id="CHEBI:29035"/>
    </ligand>
</feature>
<feature type="binding site" evidence="1">
    <location>
        <position position="210"/>
    </location>
    <ligand>
        <name>Mn(2+)</name>
        <dbReference type="ChEBI" id="CHEBI:29035"/>
    </ligand>
</feature>
<feature type="binding site" evidence="1">
    <location>
        <position position="244"/>
    </location>
    <ligand>
        <name>Mn(2+)</name>
        <dbReference type="ChEBI" id="CHEBI:29035"/>
    </ligand>
</feature>
<sequence>MAKDPGRVLIFDTTLRDGEQSPGASLNLEEKLAIAQQLARLGVDVIEAGFPFASAGDFAAVQRIAQQVGGENGPIICGLARASQRDIKACAEAVSPAPRRRIHTFIATSDIHLEHKLRKSRADVLGIVPEMVSYARSLMDDIEFSCEDAGRSDPEFLYEVIEAAIAAGATTINIPDTVGYTTPSEFGDLIAGINRYVPNIGEAVLSVHGHNDLGLAVANFLEAVKNGARQLECTINGIGERAGNASLEELVMALHVRRRYFNPFFGRDQDSPTPLSAVRTEELTKTSRLVSNLTGMVVQPNKAIVGANAFAHESGIHQDGVLKNRLTYEIIDAKTVGLSDNRISLGKLSGRSAVRARLEELGYDLTREDLDEAFARFKDLADRKREITDRDLEAIVSEQVQQPEARYQLQLVQVSCGTRLKPTATVALSEENGPDQTVSAVGTGPVDAVCRALNQLAGVPNELIEFSVKSVTEGIDAMGEVTIRLRRDGSLYSGHAADTDVVVAAAMAFINALNRLVAAQEHQPLHPQRDAVVLDARPTL</sequence>
<evidence type="ECO:0000255" key="1">
    <source>
        <dbReference type="HAMAP-Rule" id="MF_01025"/>
    </source>
</evidence>
<reference key="1">
    <citation type="journal article" date="2003" name="Nature">
        <title>The genome of a motile marine Synechococcus.</title>
        <authorList>
            <person name="Palenik B."/>
            <person name="Brahamsha B."/>
            <person name="Larimer F.W."/>
            <person name="Land M.L."/>
            <person name="Hauser L."/>
            <person name="Chain P."/>
            <person name="Lamerdin J.E."/>
            <person name="Regala W."/>
            <person name="Allen E.E."/>
            <person name="McCarren J."/>
            <person name="Paulsen I.T."/>
            <person name="Dufresne A."/>
            <person name="Partensky F."/>
            <person name="Webb E.A."/>
            <person name="Waterbury J."/>
        </authorList>
    </citation>
    <scope>NUCLEOTIDE SEQUENCE [LARGE SCALE GENOMIC DNA]</scope>
    <source>
        <strain>WH8102</strain>
    </source>
</reference>